<dbReference type="EMBL" id="CU329671">
    <property type="protein sequence ID" value="CAB53728.1"/>
    <property type="molecule type" value="Genomic_DNA"/>
</dbReference>
<dbReference type="PIR" id="T39269">
    <property type="entry name" value="T39269"/>
</dbReference>
<dbReference type="SMR" id="Q9URV0"/>
<dbReference type="BioGRID" id="276717">
    <property type="interactions" value="33"/>
</dbReference>
<dbReference type="FunCoup" id="Q9URV0">
    <property type="interactions" value="435"/>
</dbReference>
<dbReference type="STRING" id="284812.Q9URV0"/>
<dbReference type="iPTMnet" id="Q9URV0"/>
<dbReference type="PaxDb" id="4896-SPBC106.12c.1"/>
<dbReference type="EnsemblFungi" id="SPBC106.12c.1">
    <property type="protein sequence ID" value="SPBC106.12c.1:pep"/>
    <property type="gene ID" value="SPBC106.12c"/>
</dbReference>
<dbReference type="KEGG" id="spo:2540184"/>
<dbReference type="PomBase" id="SPBC106.12c"/>
<dbReference type="VEuPathDB" id="FungiDB:SPBC106.12c"/>
<dbReference type="eggNOG" id="KOG0533">
    <property type="taxonomic scope" value="Eukaryota"/>
</dbReference>
<dbReference type="HOGENOM" id="CLU_1066198_0_0_1"/>
<dbReference type="InParanoid" id="Q9URV0"/>
<dbReference type="OMA" id="GTCRAFF"/>
<dbReference type="PhylomeDB" id="Q9URV0"/>
<dbReference type="Reactome" id="R-SPO-159227">
    <property type="pathway name" value="Transport of the SLBP independent Mature mRNA"/>
</dbReference>
<dbReference type="Reactome" id="R-SPO-159231">
    <property type="pathway name" value="Transport of Mature mRNA Derived from an Intronless Transcript"/>
</dbReference>
<dbReference type="Reactome" id="R-SPO-159236">
    <property type="pathway name" value="Transport of Mature mRNA derived from an Intron-Containing Transcript"/>
</dbReference>
<dbReference type="Reactome" id="R-SPO-72163">
    <property type="pathway name" value="mRNA Splicing - Major Pathway"/>
</dbReference>
<dbReference type="PRO" id="PR:Q9URV0"/>
<dbReference type="Proteomes" id="UP000002485">
    <property type="component" value="Chromosome II"/>
</dbReference>
<dbReference type="GO" id="GO:0005730">
    <property type="term" value="C:nucleolus"/>
    <property type="evidence" value="ECO:0007005"/>
    <property type="project" value="PomBase"/>
</dbReference>
<dbReference type="GO" id="GO:0005634">
    <property type="term" value="C:nucleus"/>
    <property type="evidence" value="ECO:0007005"/>
    <property type="project" value="PomBase"/>
</dbReference>
<dbReference type="GO" id="GO:0000445">
    <property type="term" value="C:THO complex part of transcription export complex"/>
    <property type="evidence" value="ECO:0000266"/>
    <property type="project" value="PomBase"/>
</dbReference>
<dbReference type="GO" id="GO:0003729">
    <property type="term" value="F:mRNA binding"/>
    <property type="evidence" value="ECO:0000318"/>
    <property type="project" value="GO_Central"/>
</dbReference>
<dbReference type="GO" id="GO:0016973">
    <property type="term" value="P:poly(A)+ mRNA export from nucleus"/>
    <property type="evidence" value="ECO:0000305"/>
    <property type="project" value="PomBase"/>
</dbReference>
<dbReference type="Gene3D" id="3.30.70.330">
    <property type="match status" value="1"/>
</dbReference>
<dbReference type="InterPro" id="IPR051229">
    <property type="entry name" value="ALYREF_mRNA_export"/>
</dbReference>
<dbReference type="InterPro" id="IPR025715">
    <property type="entry name" value="FoP_C"/>
</dbReference>
<dbReference type="InterPro" id="IPR012677">
    <property type="entry name" value="Nucleotide-bd_a/b_plait_sf"/>
</dbReference>
<dbReference type="InterPro" id="IPR035979">
    <property type="entry name" value="RBD_domain_sf"/>
</dbReference>
<dbReference type="InterPro" id="IPR000504">
    <property type="entry name" value="RRM_dom"/>
</dbReference>
<dbReference type="PANTHER" id="PTHR19965">
    <property type="entry name" value="RNA AND EXPORT FACTOR BINDING PROTEIN"/>
    <property type="match status" value="1"/>
</dbReference>
<dbReference type="PANTHER" id="PTHR19965:SF82">
    <property type="entry name" value="THO COMPLEX SUBUNIT 4"/>
    <property type="match status" value="1"/>
</dbReference>
<dbReference type="Pfam" id="PF13865">
    <property type="entry name" value="FoP_duplication"/>
    <property type="match status" value="1"/>
</dbReference>
<dbReference type="Pfam" id="PF00076">
    <property type="entry name" value="RRM_1"/>
    <property type="match status" value="1"/>
</dbReference>
<dbReference type="SMART" id="SM00360">
    <property type="entry name" value="RRM"/>
    <property type="match status" value="1"/>
</dbReference>
<dbReference type="SUPFAM" id="SSF54928">
    <property type="entry name" value="RNA-binding domain, RBD"/>
    <property type="match status" value="1"/>
</dbReference>
<dbReference type="PROSITE" id="PS50102">
    <property type="entry name" value="RRM"/>
    <property type="match status" value="1"/>
</dbReference>
<name>YBLC_SCHPO</name>
<evidence type="ECO:0000255" key="1">
    <source>
        <dbReference type="PROSITE-ProRule" id="PRU00176"/>
    </source>
</evidence>
<evidence type="ECO:0000256" key="2">
    <source>
        <dbReference type="SAM" id="MobiDB-lite"/>
    </source>
</evidence>
<protein>
    <recommendedName>
        <fullName>Uncharacterized RNA-binding protein C106.12c</fullName>
    </recommendedName>
</protein>
<sequence length="274" mass="31437">MSLEKSLDEIINERTNGFDHKHSRRRGSQNRISKKSRLTYKFKRASKEHNSSPDDGPWQHDLDQEQDAHPRTTHLQKRQHSENRFGVRVENLHYQVLEKDVLSLFENFHPIRVIMNYDRAGRSEGSCDVYFETSQDAEDAQKTLQSTNLKGSEIQISKKSPPSLFDRISDMPHSARKPSRSSRSNRGFNRSSKKDDRSFRSSSKKSSNNSISHEDLDKELDEYAMSFHAASTVSSHSSQDFTPSIANAHEKNEPVAPSKDSNLTEEMDLQMEAV</sequence>
<reference key="1">
    <citation type="journal article" date="2002" name="Nature">
        <title>The genome sequence of Schizosaccharomyces pombe.</title>
        <authorList>
            <person name="Wood V."/>
            <person name="Gwilliam R."/>
            <person name="Rajandream M.A."/>
            <person name="Lyne M.H."/>
            <person name="Lyne R."/>
            <person name="Stewart A."/>
            <person name="Sgouros J.G."/>
            <person name="Peat N."/>
            <person name="Hayles J."/>
            <person name="Baker S.G."/>
            <person name="Basham D."/>
            <person name="Bowman S."/>
            <person name="Brooks K."/>
            <person name="Brown D."/>
            <person name="Brown S."/>
            <person name="Chillingworth T."/>
            <person name="Churcher C.M."/>
            <person name="Collins M."/>
            <person name="Connor R."/>
            <person name="Cronin A."/>
            <person name="Davis P."/>
            <person name="Feltwell T."/>
            <person name="Fraser A."/>
            <person name="Gentles S."/>
            <person name="Goble A."/>
            <person name="Hamlin N."/>
            <person name="Harris D.E."/>
            <person name="Hidalgo J."/>
            <person name="Hodgson G."/>
            <person name="Holroyd S."/>
            <person name="Hornsby T."/>
            <person name="Howarth S."/>
            <person name="Huckle E.J."/>
            <person name="Hunt S."/>
            <person name="Jagels K."/>
            <person name="James K.D."/>
            <person name="Jones L."/>
            <person name="Jones M."/>
            <person name="Leather S."/>
            <person name="McDonald S."/>
            <person name="McLean J."/>
            <person name="Mooney P."/>
            <person name="Moule S."/>
            <person name="Mungall K.L."/>
            <person name="Murphy L.D."/>
            <person name="Niblett D."/>
            <person name="Odell C."/>
            <person name="Oliver K."/>
            <person name="O'Neil S."/>
            <person name="Pearson D."/>
            <person name="Quail M.A."/>
            <person name="Rabbinowitsch E."/>
            <person name="Rutherford K.M."/>
            <person name="Rutter S."/>
            <person name="Saunders D."/>
            <person name="Seeger K."/>
            <person name="Sharp S."/>
            <person name="Skelton J."/>
            <person name="Simmonds M.N."/>
            <person name="Squares R."/>
            <person name="Squares S."/>
            <person name="Stevens K."/>
            <person name="Taylor K."/>
            <person name="Taylor R.G."/>
            <person name="Tivey A."/>
            <person name="Walsh S.V."/>
            <person name="Warren T."/>
            <person name="Whitehead S."/>
            <person name="Woodward J.R."/>
            <person name="Volckaert G."/>
            <person name="Aert R."/>
            <person name="Robben J."/>
            <person name="Grymonprez B."/>
            <person name="Weltjens I."/>
            <person name="Vanstreels E."/>
            <person name="Rieger M."/>
            <person name="Schaefer M."/>
            <person name="Mueller-Auer S."/>
            <person name="Gabel C."/>
            <person name="Fuchs M."/>
            <person name="Duesterhoeft A."/>
            <person name="Fritzc C."/>
            <person name="Holzer E."/>
            <person name="Moestl D."/>
            <person name="Hilbert H."/>
            <person name="Borzym K."/>
            <person name="Langer I."/>
            <person name="Beck A."/>
            <person name="Lehrach H."/>
            <person name="Reinhardt R."/>
            <person name="Pohl T.M."/>
            <person name="Eger P."/>
            <person name="Zimmermann W."/>
            <person name="Wedler H."/>
            <person name="Wambutt R."/>
            <person name="Purnelle B."/>
            <person name="Goffeau A."/>
            <person name="Cadieu E."/>
            <person name="Dreano S."/>
            <person name="Gloux S."/>
            <person name="Lelaure V."/>
            <person name="Mottier S."/>
            <person name="Galibert F."/>
            <person name="Aves S.J."/>
            <person name="Xiang Z."/>
            <person name="Hunt C."/>
            <person name="Moore K."/>
            <person name="Hurst S.M."/>
            <person name="Lucas M."/>
            <person name="Rochet M."/>
            <person name="Gaillardin C."/>
            <person name="Tallada V.A."/>
            <person name="Garzon A."/>
            <person name="Thode G."/>
            <person name="Daga R.R."/>
            <person name="Cruzado L."/>
            <person name="Jimenez J."/>
            <person name="Sanchez M."/>
            <person name="del Rey F."/>
            <person name="Benito J."/>
            <person name="Dominguez A."/>
            <person name="Revuelta J.L."/>
            <person name="Moreno S."/>
            <person name="Armstrong J."/>
            <person name="Forsburg S.L."/>
            <person name="Cerutti L."/>
            <person name="Lowe T."/>
            <person name="McCombie W.R."/>
            <person name="Paulsen I."/>
            <person name="Potashkin J."/>
            <person name="Shpakovski G.V."/>
            <person name="Ussery D."/>
            <person name="Barrell B.G."/>
            <person name="Nurse P."/>
        </authorList>
    </citation>
    <scope>NUCLEOTIDE SEQUENCE [LARGE SCALE GENOMIC DNA]</scope>
    <source>
        <strain>972 / ATCC 24843</strain>
    </source>
</reference>
<gene>
    <name type="ORF">SPBC106.12c</name>
</gene>
<feature type="chain" id="PRO_0000082021" description="Uncharacterized RNA-binding protein C106.12c">
    <location>
        <begin position="1"/>
        <end position="274"/>
    </location>
</feature>
<feature type="domain" description="RRM" evidence="1">
    <location>
        <begin position="85"/>
        <end position="161"/>
    </location>
</feature>
<feature type="region of interest" description="Disordered" evidence="2">
    <location>
        <begin position="1"/>
        <end position="63"/>
    </location>
</feature>
<feature type="region of interest" description="Disordered" evidence="2">
    <location>
        <begin position="148"/>
        <end position="217"/>
    </location>
</feature>
<feature type="region of interest" description="Disordered" evidence="2">
    <location>
        <begin position="230"/>
        <end position="274"/>
    </location>
</feature>
<feature type="compositionally biased region" description="Basic and acidic residues" evidence="2">
    <location>
        <begin position="1"/>
        <end position="20"/>
    </location>
</feature>
<feature type="compositionally biased region" description="Basic residues" evidence="2">
    <location>
        <begin position="21"/>
        <end position="44"/>
    </location>
</feature>
<feature type="compositionally biased region" description="Basic and acidic residues" evidence="2">
    <location>
        <begin position="45"/>
        <end position="63"/>
    </location>
</feature>
<feature type="compositionally biased region" description="Polar residues" evidence="2">
    <location>
        <begin position="148"/>
        <end position="160"/>
    </location>
</feature>
<feature type="compositionally biased region" description="Low complexity" evidence="2">
    <location>
        <begin position="181"/>
        <end position="190"/>
    </location>
</feature>
<feature type="compositionally biased region" description="Low complexity" evidence="2">
    <location>
        <begin position="200"/>
        <end position="211"/>
    </location>
</feature>
<feature type="compositionally biased region" description="Polar residues" evidence="2">
    <location>
        <begin position="230"/>
        <end position="245"/>
    </location>
</feature>
<feature type="compositionally biased region" description="Acidic residues" evidence="2">
    <location>
        <begin position="263"/>
        <end position="274"/>
    </location>
</feature>
<keyword id="KW-1185">Reference proteome</keyword>
<keyword id="KW-0694">RNA-binding</keyword>
<organism>
    <name type="scientific">Schizosaccharomyces pombe (strain 972 / ATCC 24843)</name>
    <name type="common">Fission yeast</name>
    <dbReference type="NCBI Taxonomy" id="284812"/>
    <lineage>
        <taxon>Eukaryota</taxon>
        <taxon>Fungi</taxon>
        <taxon>Dikarya</taxon>
        <taxon>Ascomycota</taxon>
        <taxon>Taphrinomycotina</taxon>
        <taxon>Schizosaccharomycetes</taxon>
        <taxon>Schizosaccharomycetales</taxon>
        <taxon>Schizosaccharomycetaceae</taxon>
        <taxon>Schizosaccharomyces</taxon>
    </lineage>
</organism>
<accession>Q9URV0</accession>
<proteinExistence type="predicted"/>